<organism>
    <name type="scientific">Pseudotsuga menziesii</name>
    <name type="common">Douglas-fir</name>
    <name type="synonym">Abies menziesii</name>
    <dbReference type="NCBI Taxonomy" id="3357"/>
    <lineage>
        <taxon>Eukaryota</taxon>
        <taxon>Viridiplantae</taxon>
        <taxon>Streptophyta</taxon>
        <taxon>Embryophyta</taxon>
        <taxon>Tracheophyta</taxon>
        <taxon>Spermatophyta</taxon>
        <taxon>Pinopsida</taxon>
        <taxon>Pinidae</taxon>
        <taxon>Conifers I</taxon>
        <taxon>Pinales</taxon>
        <taxon>Pinaceae</taxon>
        <taxon>Pseudotsuga</taxon>
    </lineage>
</organism>
<dbReference type="EC" id="1.2.1.12"/>
<dbReference type="SMR" id="P85954"/>
<dbReference type="UniPathway" id="UPA00109">
    <property type="reaction ID" value="UER00184"/>
</dbReference>
<dbReference type="GO" id="GO:0005829">
    <property type="term" value="C:cytosol"/>
    <property type="evidence" value="ECO:0007669"/>
    <property type="project" value="TreeGrafter"/>
</dbReference>
<dbReference type="GO" id="GO:0004365">
    <property type="term" value="F:glyceraldehyde-3-phosphate dehydrogenase (NAD+) (phosphorylating) activity"/>
    <property type="evidence" value="ECO:0007669"/>
    <property type="project" value="UniProtKB-EC"/>
</dbReference>
<dbReference type="GO" id="GO:0006096">
    <property type="term" value="P:glycolytic process"/>
    <property type="evidence" value="ECO:0007669"/>
    <property type="project" value="UniProtKB-UniPathway"/>
</dbReference>
<dbReference type="InterPro" id="IPR020831">
    <property type="entry name" value="GlycerAld/Erythrose_P_DH"/>
</dbReference>
<dbReference type="PANTHER" id="PTHR10836">
    <property type="entry name" value="GLYCERALDEHYDE 3-PHOSPHATE DEHYDROGENASE"/>
    <property type="match status" value="1"/>
</dbReference>
<dbReference type="PANTHER" id="PTHR10836:SF112">
    <property type="entry name" value="GLYCERALDEHYDE-3-PHOSPHATE DEHYDROGENASE GAPC1, CYTOSOLIC-RELATED"/>
    <property type="match status" value="1"/>
</dbReference>
<dbReference type="SUPFAM" id="SSF55347">
    <property type="entry name" value="Glyceraldehyde-3-phosphate dehydrogenase-like, C-terminal domain"/>
    <property type="match status" value="1"/>
</dbReference>
<proteinExistence type="evidence at protein level"/>
<sequence>FGIVEGLMTTVHSITATQKVPTPDVSVVDLTVRLVSWYDNEWGYSSR</sequence>
<reference evidence="6" key="1">
    <citation type="journal article" date="2008" name="J. Proteomics">
        <title>A proteomics approach to identify proteins differentially expressed in Douglas-fir seedlings infected by Phellinus sulphurascens.</title>
        <authorList>
            <person name="Islam M.A."/>
            <person name="Sturrock R.N."/>
            <person name="Ekramoddoullah A.K.M."/>
        </authorList>
    </citation>
    <scope>IDENTIFICATION BY MASS SPECTROMETRY</scope>
</reference>
<name>G3PC_PSEMZ</name>
<feature type="chain" id="PRO_0000397947" description="Glyceraldehyde-3-phosphate dehydrogenase, cytosolic">
    <location>
        <begin position="1" status="less than"/>
        <end position="47" status="greater than"/>
    </location>
</feature>
<feature type="site" description="Activates thiol group during catalysis" evidence="1">
    <location>
        <position position="12"/>
    </location>
</feature>
<feature type="non-consecutive residues" evidence="5">
    <location>
        <begin position="19"/>
        <end position="20"/>
    </location>
</feature>
<feature type="non-consecutive residues" evidence="5">
    <location>
        <begin position="33"/>
        <end position="34"/>
    </location>
</feature>
<feature type="non-terminal residue" evidence="5">
    <location>
        <position position="1"/>
    </location>
</feature>
<feature type="non-terminal residue" evidence="5">
    <location>
        <position position="47"/>
    </location>
</feature>
<keyword id="KW-0963">Cytoplasm</keyword>
<keyword id="KW-0324">Glycolysis</keyword>
<keyword id="KW-0520">NAD</keyword>
<keyword id="KW-0560">Oxidoreductase</keyword>
<protein>
    <recommendedName>
        <fullName evidence="2">Glyceraldehyde-3-phosphate dehydrogenase, cytosolic</fullName>
        <ecNumber>1.2.1.12</ecNumber>
    </recommendedName>
</protein>
<comment type="catalytic activity">
    <reaction evidence="4 6">
        <text>D-glyceraldehyde 3-phosphate + phosphate + NAD(+) = (2R)-3-phospho-glyceroyl phosphate + NADH + H(+)</text>
        <dbReference type="Rhea" id="RHEA:10300"/>
        <dbReference type="ChEBI" id="CHEBI:15378"/>
        <dbReference type="ChEBI" id="CHEBI:43474"/>
        <dbReference type="ChEBI" id="CHEBI:57540"/>
        <dbReference type="ChEBI" id="CHEBI:57604"/>
        <dbReference type="ChEBI" id="CHEBI:57945"/>
        <dbReference type="ChEBI" id="CHEBI:59776"/>
        <dbReference type="EC" id="1.2.1.12"/>
    </reaction>
</comment>
<comment type="pathway">
    <text evidence="6">Carbohydrate degradation; glycolysis; pyruvate from D-glyceraldehyde 3-phosphate: step 1/5.</text>
</comment>
<comment type="subunit">
    <text evidence="6">Homotetramer.</text>
</comment>
<comment type="subcellular location">
    <subcellularLocation>
        <location evidence="6">Cytoplasm</location>
    </subcellularLocation>
</comment>
<comment type="miscellaneous">
    <text evidence="6">Plants contain three forms of GAPDH: a cytosolic form which participates in glycolysis and two chloroplast forms which participates in photosynthesis. These three forms are encoded by distinct genes.</text>
</comment>
<comment type="similarity">
    <text evidence="3">Belongs to the glyceraldehyde-3-phosphate dehydrogenase family.</text>
</comment>
<evidence type="ECO:0000250" key="1">
    <source>
        <dbReference type="UniProtKB" id="P46406"/>
    </source>
</evidence>
<evidence type="ECO:0000250" key="2">
    <source>
        <dbReference type="UniProtKB" id="Q39769"/>
    </source>
</evidence>
<evidence type="ECO:0000255" key="3"/>
<evidence type="ECO:0000255" key="4">
    <source>
        <dbReference type="PROSITE-ProRule" id="PRU10009"/>
    </source>
</evidence>
<evidence type="ECO:0000303" key="5">
    <source>
    </source>
</evidence>
<evidence type="ECO:0000305" key="6"/>
<accession>P85954</accession>